<dbReference type="EMBL" id="CP000678">
    <property type="protein sequence ID" value="ABQ86955.1"/>
    <property type="molecule type" value="Genomic_DNA"/>
</dbReference>
<dbReference type="SMR" id="A5UL77"/>
<dbReference type="STRING" id="420247.Msm_0750"/>
<dbReference type="EnsemblBacteria" id="ABQ86955">
    <property type="protein sequence ID" value="ABQ86955"/>
    <property type="gene ID" value="Msm_0750"/>
</dbReference>
<dbReference type="KEGG" id="msi:Msm_0750"/>
<dbReference type="PATRIC" id="fig|420247.28.peg.747"/>
<dbReference type="eggNOG" id="arCOG04094">
    <property type="taxonomic scope" value="Archaea"/>
</dbReference>
<dbReference type="HOGENOM" id="CLU_093240_2_1_2"/>
<dbReference type="Proteomes" id="UP000001992">
    <property type="component" value="Chromosome"/>
</dbReference>
<dbReference type="GO" id="GO:0015934">
    <property type="term" value="C:large ribosomal subunit"/>
    <property type="evidence" value="ECO:0007669"/>
    <property type="project" value="InterPro"/>
</dbReference>
<dbReference type="GO" id="GO:0019843">
    <property type="term" value="F:rRNA binding"/>
    <property type="evidence" value="ECO:0007669"/>
    <property type="project" value="UniProtKB-UniRule"/>
</dbReference>
<dbReference type="GO" id="GO:0003735">
    <property type="term" value="F:structural constituent of ribosome"/>
    <property type="evidence" value="ECO:0007669"/>
    <property type="project" value="InterPro"/>
</dbReference>
<dbReference type="GO" id="GO:0006412">
    <property type="term" value="P:translation"/>
    <property type="evidence" value="ECO:0007669"/>
    <property type="project" value="UniProtKB-UniRule"/>
</dbReference>
<dbReference type="CDD" id="cd06089">
    <property type="entry name" value="KOW_RPL26"/>
    <property type="match status" value="1"/>
</dbReference>
<dbReference type="Gene3D" id="2.30.30.30">
    <property type="match status" value="1"/>
</dbReference>
<dbReference type="HAMAP" id="MF_01326_A">
    <property type="entry name" value="Ribosomal_uL24_A"/>
    <property type="match status" value="1"/>
</dbReference>
<dbReference type="InterPro" id="IPR005824">
    <property type="entry name" value="KOW"/>
</dbReference>
<dbReference type="InterPro" id="IPR014722">
    <property type="entry name" value="Rib_uL2_dom2"/>
</dbReference>
<dbReference type="InterPro" id="IPR005825">
    <property type="entry name" value="Ribosomal_uL24_CS"/>
</dbReference>
<dbReference type="InterPro" id="IPR005756">
    <property type="entry name" value="Ribosomal_uL24_euk/arc"/>
</dbReference>
<dbReference type="InterPro" id="IPR041988">
    <property type="entry name" value="Ribosomal_uL24_KOW"/>
</dbReference>
<dbReference type="InterPro" id="IPR008991">
    <property type="entry name" value="Translation_prot_SH3-like_sf"/>
</dbReference>
<dbReference type="NCBIfam" id="TIGR01080">
    <property type="entry name" value="rplX_A_E"/>
    <property type="match status" value="1"/>
</dbReference>
<dbReference type="PANTHER" id="PTHR11143">
    <property type="entry name" value="60S RIBOSOMAL PROTEIN L26 FAMILY MEMBER"/>
    <property type="match status" value="1"/>
</dbReference>
<dbReference type="Pfam" id="PF00467">
    <property type="entry name" value="KOW"/>
    <property type="match status" value="1"/>
</dbReference>
<dbReference type="Pfam" id="PF16906">
    <property type="entry name" value="Ribosomal_L26"/>
    <property type="match status" value="1"/>
</dbReference>
<dbReference type="SMART" id="SM00739">
    <property type="entry name" value="KOW"/>
    <property type="match status" value="1"/>
</dbReference>
<dbReference type="SUPFAM" id="SSF50104">
    <property type="entry name" value="Translation proteins SH3-like domain"/>
    <property type="match status" value="1"/>
</dbReference>
<dbReference type="PROSITE" id="PS01108">
    <property type="entry name" value="RIBOSOMAL_L24"/>
    <property type="match status" value="1"/>
</dbReference>
<gene>
    <name evidence="1" type="primary">rpl24</name>
    <name type="ordered locus">Msm_0750</name>
</gene>
<sequence>MSKQPRKQRKALYNAPAHARGKHMSATLSKDLRADIGKRSLPIRKGDKVQVLRGDFKGHEGAVLGVDYGSYKITIEEVTLSKPDGTAVFLPVDPSNVMIIDADMDDDRRIKNVTGDN</sequence>
<accession>A5UL77</accession>
<comment type="function">
    <text evidence="1">One of two assembly initiator proteins, it binds directly to the 5'-end of the 23S rRNA, where it nucleates assembly of the 50S subunit.</text>
</comment>
<comment type="function">
    <text evidence="1">Located at the polypeptide exit tunnel on the outside of the subunit.</text>
</comment>
<comment type="subunit">
    <text evidence="1">Part of the 50S ribosomal subunit.</text>
</comment>
<comment type="similarity">
    <text evidence="1">Belongs to the universal ribosomal protein uL24 family.</text>
</comment>
<name>RL24_METS3</name>
<feature type="chain" id="PRO_1000052254" description="Large ribosomal subunit protein uL24">
    <location>
        <begin position="1"/>
        <end position="117"/>
    </location>
</feature>
<feature type="region of interest" description="Disordered" evidence="2">
    <location>
        <begin position="1"/>
        <end position="28"/>
    </location>
</feature>
<feature type="compositionally biased region" description="Basic residues" evidence="2">
    <location>
        <begin position="1"/>
        <end position="10"/>
    </location>
</feature>
<organism>
    <name type="scientific">Methanobrevibacter smithii (strain ATCC 35061 / DSM 861 / OCM 144 / PS)</name>
    <dbReference type="NCBI Taxonomy" id="420247"/>
    <lineage>
        <taxon>Archaea</taxon>
        <taxon>Methanobacteriati</taxon>
        <taxon>Methanobacteriota</taxon>
        <taxon>Methanomada group</taxon>
        <taxon>Methanobacteria</taxon>
        <taxon>Methanobacteriales</taxon>
        <taxon>Methanobacteriaceae</taxon>
        <taxon>Methanobrevibacter</taxon>
    </lineage>
</organism>
<reference key="1">
    <citation type="journal article" date="2007" name="Proc. Natl. Acad. Sci. U.S.A.">
        <title>Genomic and metabolic adaptations of Methanobrevibacter smithii to the human gut.</title>
        <authorList>
            <person name="Samuel B.S."/>
            <person name="Hansen E.E."/>
            <person name="Manchester J.K."/>
            <person name="Coutinho P.M."/>
            <person name="Henrissat B."/>
            <person name="Fulton R."/>
            <person name="Latreille P."/>
            <person name="Kim K."/>
            <person name="Wilson R.K."/>
            <person name="Gordon J.I."/>
        </authorList>
    </citation>
    <scope>NUCLEOTIDE SEQUENCE [LARGE SCALE GENOMIC DNA]</scope>
    <source>
        <strain>ATCC 35061 / DSM 861 / OCM 144 / PS</strain>
    </source>
</reference>
<evidence type="ECO:0000255" key="1">
    <source>
        <dbReference type="HAMAP-Rule" id="MF_01326"/>
    </source>
</evidence>
<evidence type="ECO:0000256" key="2">
    <source>
        <dbReference type="SAM" id="MobiDB-lite"/>
    </source>
</evidence>
<evidence type="ECO:0000305" key="3"/>
<proteinExistence type="inferred from homology"/>
<keyword id="KW-0687">Ribonucleoprotein</keyword>
<keyword id="KW-0689">Ribosomal protein</keyword>
<keyword id="KW-0694">RNA-binding</keyword>
<keyword id="KW-0699">rRNA-binding</keyword>
<protein>
    <recommendedName>
        <fullName evidence="1">Large ribosomal subunit protein uL24</fullName>
    </recommendedName>
    <alternativeName>
        <fullName evidence="3">50S ribosomal protein L24</fullName>
    </alternativeName>
</protein>